<accession>Q1MA74</accession>
<dbReference type="EC" id="1.2.1.41" evidence="1"/>
<dbReference type="EMBL" id="AM236080">
    <property type="protein sequence ID" value="CAK10166.1"/>
    <property type="molecule type" value="Genomic_DNA"/>
</dbReference>
<dbReference type="RefSeq" id="WP_011654021.1">
    <property type="nucleotide sequence ID" value="NC_008380.1"/>
</dbReference>
<dbReference type="SMR" id="Q1MA74"/>
<dbReference type="EnsemblBacteria" id="CAK10166">
    <property type="protein sequence ID" value="CAK10166"/>
    <property type="gene ID" value="RL4683"/>
</dbReference>
<dbReference type="KEGG" id="rle:RL4683"/>
<dbReference type="eggNOG" id="COG0014">
    <property type="taxonomic scope" value="Bacteria"/>
</dbReference>
<dbReference type="HOGENOM" id="CLU_030231_0_0_5"/>
<dbReference type="UniPathway" id="UPA00098">
    <property type="reaction ID" value="UER00360"/>
</dbReference>
<dbReference type="Proteomes" id="UP000006575">
    <property type="component" value="Chromosome"/>
</dbReference>
<dbReference type="GO" id="GO:0005737">
    <property type="term" value="C:cytoplasm"/>
    <property type="evidence" value="ECO:0007669"/>
    <property type="project" value="UniProtKB-SubCell"/>
</dbReference>
<dbReference type="GO" id="GO:0004350">
    <property type="term" value="F:glutamate-5-semialdehyde dehydrogenase activity"/>
    <property type="evidence" value="ECO:0007669"/>
    <property type="project" value="UniProtKB-UniRule"/>
</dbReference>
<dbReference type="GO" id="GO:0050661">
    <property type="term" value="F:NADP binding"/>
    <property type="evidence" value="ECO:0007669"/>
    <property type="project" value="InterPro"/>
</dbReference>
<dbReference type="GO" id="GO:0055129">
    <property type="term" value="P:L-proline biosynthetic process"/>
    <property type="evidence" value="ECO:0007669"/>
    <property type="project" value="UniProtKB-UniRule"/>
</dbReference>
<dbReference type="CDD" id="cd07079">
    <property type="entry name" value="ALDH_F18-19_ProA-GPR"/>
    <property type="match status" value="1"/>
</dbReference>
<dbReference type="Gene3D" id="3.40.605.10">
    <property type="entry name" value="Aldehyde Dehydrogenase, Chain A, domain 1"/>
    <property type="match status" value="1"/>
</dbReference>
<dbReference type="Gene3D" id="3.40.309.10">
    <property type="entry name" value="Aldehyde Dehydrogenase, Chain A, domain 2"/>
    <property type="match status" value="1"/>
</dbReference>
<dbReference type="HAMAP" id="MF_00412">
    <property type="entry name" value="ProA"/>
    <property type="match status" value="1"/>
</dbReference>
<dbReference type="InterPro" id="IPR016161">
    <property type="entry name" value="Ald_DH/histidinol_DH"/>
</dbReference>
<dbReference type="InterPro" id="IPR016163">
    <property type="entry name" value="Ald_DH_C"/>
</dbReference>
<dbReference type="InterPro" id="IPR016162">
    <property type="entry name" value="Ald_DH_N"/>
</dbReference>
<dbReference type="InterPro" id="IPR015590">
    <property type="entry name" value="Aldehyde_DH_dom"/>
</dbReference>
<dbReference type="InterPro" id="IPR020593">
    <property type="entry name" value="G-glutamylP_reductase_CS"/>
</dbReference>
<dbReference type="InterPro" id="IPR012134">
    <property type="entry name" value="Glu-5-SA_DH"/>
</dbReference>
<dbReference type="InterPro" id="IPR000965">
    <property type="entry name" value="GPR_dom"/>
</dbReference>
<dbReference type="NCBIfam" id="NF001221">
    <property type="entry name" value="PRK00197.1"/>
    <property type="match status" value="1"/>
</dbReference>
<dbReference type="NCBIfam" id="TIGR00407">
    <property type="entry name" value="proA"/>
    <property type="match status" value="1"/>
</dbReference>
<dbReference type="PANTHER" id="PTHR11063:SF8">
    <property type="entry name" value="DELTA-1-PYRROLINE-5-CARBOXYLATE SYNTHASE"/>
    <property type="match status" value="1"/>
</dbReference>
<dbReference type="PANTHER" id="PTHR11063">
    <property type="entry name" value="GLUTAMATE SEMIALDEHYDE DEHYDROGENASE"/>
    <property type="match status" value="1"/>
</dbReference>
<dbReference type="Pfam" id="PF00171">
    <property type="entry name" value="Aldedh"/>
    <property type="match status" value="1"/>
</dbReference>
<dbReference type="PIRSF" id="PIRSF000151">
    <property type="entry name" value="GPR"/>
    <property type="match status" value="1"/>
</dbReference>
<dbReference type="SUPFAM" id="SSF53720">
    <property type="entry name" value="ALDH-like"/>
    <property type="match status" value="1"/>
</dbReference>
<dbReference type="PROSITE" id="PS01223">
    <property type="entry name" value="PROA"/>
    <property type="match status" value="1"/>
</dbReference>
<reference key="1">
    <citation type="journal article" date="2006" name="Genome Biol.">
        <title>The genome of Rhizobium leguminosarum has recognizable core and accessory components.</title>
        <authorList>
            <person name="Young J.P.W."/>
            <person name="Crossman L.C."/>
            <person name="Johnston A.W.B."/>
            <person name="Thomson N.R."/>
            <person name="Ghazoui Z.F."/>
            <person name="Hull K.H."/>
            <person name="Wexler M."/>
            <person name="Curson A.R.J."/>
            <person name="Todd J.D."/>
            <person name="Poole P.S."/>
            <person name="Mauchline T.H."/>
            <person name="East A.K."/>
            <person name="Quail M.A."/>
            <person name="Churcher C."/>
            <person name="Arrowsmith C."/>
            <person name="Cherevach I."/>
            <person name="Chillingworth T."/>
            <person name="Clarke K."/>
            <person name="Cronin A."/>
            <person name="Davis P."/>
            <person name="Fraser A."/>
            <person name="Hance Z."/>
            <person name="Hauser H."/>
            <person name="Jagels K."/>
            <person name="Moule S."/>
            <person name="Mungall K."/>
            <person name="Norbertczak H."/>
            <person name="Rabbinowitsch E."/>
            <person name="Sanders M."/>
            <person name="Simmonds M."/>
            <person name="Whitehead S."/>
            <person name="Parkhill J."/>
        </authorList>
    </citation>
    <scope>NUCLEOTIDE SEQUENCE [LARGE SCALE GENOMIC DNA]</scope>
    <source>
        <strain>DSM 114642 / LMG 32736 / 3841</strain>
    </source>
</reference>
<protein>
    <recommendedName>
        <fullName evidence="1">Gamma-glutamyl phosphate reductase</fullName>
        <shortName evidence="1">GPR</shortName>
        <ecNumber evidence="1">1.2.1.41</ecNumber>
    </recommendedName>
    <alternativeName>
        <fullName evidence="1">Glutamate-5-semialdehyde dehydrogenase</fullName>
    </alternativeName>
    <alternativeName>
        <fullName evidence="1">Glutamyl-gamma-semialdehyde dehydrogenase</fullName>
        <shortName evidence="1">GSA dehydrogenase</shortName>
    </alternativeName>
</protein>
<name>PROA_RHIJ3</name>
<keyword id="KW-0028">Amino-acid biosynthesis</keyword>
<keyword id="KW-0963">Cytoplasm</keyword>
<keyword id="KW-0521">NADP</keyword>
<keyword id="KW-0560">Oxidoreductase</keyword>
<keyword id="KW-0641">Proline biosynthesis</keyword>
<organism>
    <name type="scientific">Rhizobium johnstonii (strain DSM 114642 / LMG 32736 / 3841)</name>
    <name type="common">Rhizobium leguminosarum bv. viciae</name>
    <dbReference type="NCBI Taxonomy" id="216596"/>
    <lineage>
        <taxon>Bacteria</taxon>
        <taxon>Pseudomonadati</taxon>
        <taxon>Pseudomonadota</taxon>
        <taxon>Alphaproteobacteria</taxon>
        <taxon>Hyphomicrobiales</taxon>
        <taxon>Rhizobiaceae</taxon>
        <taxon>Rhizobium/Agrobacterium group</taxon>
        <taxon>Rhizobium</taxon>
        <taxon>Rhizobium johnstonii</taxon>
    </lineage>
</organism>
<feature type="chain" id="PRO_0000252585" description="Gamma-glutamyl phosphate reductase">
    <location>
        <begin position="1"/>
        <end position="427"/>
    </location>
</feature>
<sequence length="427" mass="44730">MLDTVAPGPDIDVLMNDIGRKAKAAARPLGFASTEAKNSALNAMADAILANKAHILAENAKDLKDIEGTEMLASFVDRLTLNDKRVAEMAEGIRAIAALADPVGEVIAAWDRPNGLKIERVRTPLGVIGVIFESRPNVTADAGALCLKAGNAVILRCGSDSRRSSQAIHACLVKGLKAAGLPEHAIQLVPVTDRAAVGAMLRGLDGAIDVIVPRGGKSLVARVQSEARVPVFAHLEGLCHIYVDASADIEMAKKIIVNAKMRRTGICGAVETLLVDGAAIGTHLTPLLEALTDAGCEIRASPTVLKVAPGMKPATEEDWSTEYLDAIISVAVVDGISGAIAHIQTYSSNHTEAVIAEDPDVVARFFTEVDSAILLHNASTQFADGGEFGMGAEIGIATGKMHARGPVGVEQLTSFKYRVHGAGQTRP</sequence>
<comment type="function">
    <text evidence="1">Catalyzes the NADPH-dependent reduction of L-glutamate 5-phosphate into L-glutamate 5-semialdehyde and phosphate. The product spontaneously undergoes cyclization to form 1-pyrroline-5-carboxylate.</text>
</comment>
<comment type="catalytic activity">
    <reaction evidence="1">
        <text>L-glutamate 5-semialdehyde + phosphate + NADP(+) = L-glutamyl 5-phosphate + NADPH + H(+)</text>
        <dbReference type="Rhea" id="RHEA:19541"/>
        <dbReference type="ChEBI" id="CHEBI:15378"/>
        <dbReference type="ChEBI" id="CHEBI:43474"/>
        <dbReference type="ChEBI" id="CHEBI:57783"/>
        <dbReference type="ChEBI" id="CHEBI:58066"/>
        <dbReference type="ChEBI" id="CHEBI:58274"/>
        <dbReference type="ChEBI" id="CHEBI:58349"/>
        <dbReference type="EC" id="1.2.1.41"/>
    </reaction>
</comment>
<comment type="pathway">
    <text evidence="1">Amino-acid biosynthesis; L-proline biosynthesis; L-glutamate 5-semialdehyde from L-glutamate: step 2/2.</text>
</comment>
<comment type="subcellular location">
    <subcellularLocation>
        <location evidence="1">Cytoplasm</location>
    </subcellularLocation>
</comment>
<comment type="similarity">
    <text evidence="1">Belongs to the gamma-glutamyl phosphate reductase family.</text>
</comment>
<proteinExistence type="inferred from homology"/>
<evidence type="ECO:0000255" key="1">
    <source>
        <dbReference type="HAMAP-Rule" id="MF_00412"/>
    </source>
</evidence>
<gene>
    <name evidence="1" type="primary">proA</name>
    <name type="ordered locus">RL4683</name>
</gene>